<accession>Q69QZ0</accession>
<accession>A0A0P0VQR9</accession>
<sequence length="354" mass="39274">MCVEELEGAERLDFGGVAELETTPADFEMEKVCENTVSLDFKQARSSSFVPVIRSGDWSDIGGRDYMEDAHVCISDLANNFGHNSVDDEIISFYGVFDGHGGKDAAHYVRDNLPRVIVEDADFPLELEKVVRRSFVQTDSQFAERCSHQNALSSGTTALTAMIFGRSLLVANAGDCRAVLSRRGTAIEMSKDHRTCCLNERKRIESLGGYVDDGYLNGQLAVTRALGDWHLEGLKEVGEPGGPLSAEPELKMITLTKEDEFLIIGSDGIWDFFSNQNAVDFTRKRLQEHNDLRLCCKQIVEEAIRRGASDNLTAVMVSFHQEAPPQLRVNRTGRVERSISAEGLHSLRVLLEGQ</sequence>
<gene>
    <name type="ordered locus">Os02g0799000</name>
    <name type="ordered locus">LOC_Os02g55560</name>
    <name type="ORF">OJ1695_D07.18</name>
    <name type="ORF">OsJ_008442</name>
</gene>
<dbReference type="EC" id="3.1.3.16"/>
<dbReference type="EMBL" id="AP005295">
    <property type="protein sequence ID" value="BAD36061.1"/>
    <property type="molecule type" value="Genomic_DNA"/>
</dbReference>
<dbReference type="EMBL" id="AP008208">
    <property type="protein sequence ID" value="BAF10321.1"/>
    <property type="molecule type" value="Genomic_DNA"/>
</dbReference>
<dbReference type="EMBL" id="AP014958">
    <property type="protein sequence ID" value="BAS81390.1"/>
    <property type="molecule type" value="Genomic_DNA"/>
</dbReference>
<dbReference type="EMBL" id="CM000139">
    <property type="protein sequence ID" value="EAZ24959.1"/>
    <property type="molecule type" value="Genomic_DNA"/>
</dbReference>
<dbReference type="EMBL" id="AK099720">
    <property type="status" value="NOT_ANNOTATED_CDS"/>
    <property type="molecule type" value="mRNA"/>
</dbReference>
<dbReference type="RefSeq" id="XP_015626587.1">
    <property type="nucleotide sequence ID" value="XM_015771101.1"/>
</dbReference>
<dbReference type="SMR" id="Q69QZ0"/>
<dbReference type="FunCoup" id="Q69QZ0">
    <property type="interactions" value="4"/>
</dbReference>
<dbReference type="STRING" id="39947.Q69QZ0"/>
<dbReference type="iPTMnet" id="Q69QZ0"/>
<dbReference type="PaxDb" id="39947-Q69QZ0"/>
<dbReference type="EnsemblPlants" id="Os02t0799000-01">
    <property type="protein sequence ID" value="Os02t0799000-01"/>
    <property type="gene ID" value="Os02g0799000"/>
</dbReference>
<dbReference type="Gramene" id="Os02t0799000-01">
    <property type="protein sequence ID" value="Os02t0799000-01"/>
    <property type="gene ID" value="Os02g0799000"/>
</dbReference>
<dbReference type="KEGG" id="dosa:Os02g0799000"/>
<dbReference type="eggNOG" id="KOG0698">
    <property type="taxonomic scope" value="Eukaryota"/>
</dbReference>
<dbReference type="HOGENOM" id="CLU_013173_21_1_1"/>
<dbReference type="InParanoid" id="Q69QZ0"/>
<dbReference type="OMA" id="TAMGESW"/>
<dbReference type="OrthoDB" id="770508at2759"/>
<dbReference type="Proteomes" id="UP000000763">
    <property type="component" value="Chromosome 2"/>
</dbReference>
<dbReference type="Proteomes" id="UP000007752">
    <property type="component" value="Chromosome 2"/>
</dbReference>
<dbReference type="Proteomes" id="UP000059680">
    <property type="component" value="Chromosome 2"/>
</dbReference>
<dbReference type="GO" id="GO:0046872">
    <property type="term" value="F:metal ion binding"/>
    <property type="evidence" value="ECO:0007669"/>
    <property type="project" value="UniProtKB-KW"/>
</dbReference>
<dbReference type="GO" id="GO:0004722">
    <property type="term" value="F:protein serine/threonine phosphatase activity"/>
    <property type="evidence" value="ECO:0007669"/>
    <property type="project" value="UniProtKB-EC"/>
</dbReference>
<dbReference type="GO" id="GO:0007165">
    <property type="term" value="P:signal transduction"/>
    <property type="evidence" value="ECO:0000318"/>
    <property type="project" value="GO_Central"/>
</dbReference>
<dbReference type="CDD" id="cd00143">
    <property type="entry name" value="PP2Cc"/>
    <property type="match status" value="1"/>
</dbReference>
<dbReference type="FunFam" id="3.60.40.10:FF:000004">
    <property type="entry name" value="Probable protein phosphatase 2C 22"/>
    <property type="match status" value="1"/>
</dbReference>
<dbReference type="Gene3D" id="3.60.40.10">
    <property type="entry name" value="PPM-type phosphatase domain"/>
    <property type="match status" value="1"/>
</dbReference>
<dbReference type="InterPro" id="IPR015655">
    <property type="entry name" value="PP2C"/>
</dbReference>
<dbReference type="InterPro" id="IPR000222">
    <property type="entry name" value="PP2C_BS"/>
</dbReference>
<dbReference type="InterPro" id="IPR036457">
    <property type="entry name" value="PPM-type-like_dom_sf"/>
</dbReference>
<dbReference type="InterPro" id="IPR001932">
    <property type="entry name" value="PPM-type_phosphatase-like_dom"/>
</dbReference>
<dbReference type="PANTHER" id="PTHR13832">
    <property type="entry name" value="PROTEIN PHOSPHATASE 2C"/>
    <property type="match status" value="1"/>
</dbReference>
<dbReference type="PANTHER" id="PTHR13832:SF684">
    <property type="entry name" value="PROTEIN PHOSPHATASE 2C 27-RELATED"/>
    <property type="match status" value="1"/>
</dbReference>
<dbReference type="Pfam" id="PF00481">
    <property type="entry name" value="PP2C"/>
    <property type="match status" value="1"/>
</dbReference>
<dbReference type="SMART" id="SM00332">
    <property type="entry name" value="PP2Cc"/>
    <property type="match status" value="1"/>
</dbReference>
<dbReference type="SUPFAM" id="SSF81606">
    <property type="entry name" value="PP2C-like"/>
    <property type="match status" value="1"/>
</dbReference>
<dbReference type="PROSITE" id="PS01032">
    <property type="entry name" value="PPM_1"/>
    <property type="match status" value="1"/>
</dbReference>
<dbReference type="PROSITE" id="PS51746">
    <property type="entry name" value="PPM_2"/>
    <property type="match status" value="1"/>
</dbReference>
<keyword id="KW-0378">Hydrolase</keyword>
<keyword id="KW-0460">Magnesium</keyword>
<keyword id="KW-0464">Manganese</keyword>
<keyword id="KW-0479">Metal-binding</keyword>
<keyword id="KW-0904">Protein phosphatase</keyword>
<keyword id="KW-1185">Reference proteome</keyword>
<reference key="1">
    <citation type="journal article" date="2005" name="Nature">
        <title>The map-based sequence of the rice genome.</title>
        <authorList>
            <consortium name="International rice genome sequencing project (IRGSP)"/>
        </authorList>
    </citation>
    <scope>NUCLEOTIDE SEQUENCE [LARGE SCALE GENOMIC DNA]</scope>
    <source>
        <strain>cv. Nipponbare</strain>
    </source>
</reference>
<reference key="2">
    <citation type="journal article" date="2008" name="Nucleic Acids Res.">
        <title>The rice annotation project database (RAP-DB): 2008 update.</title>
        <authorList>
            <consortium name="The rice annotation project (RAP)"/>
        </authorList>
    </citation>
    <scope>GENOME REANNOTATION</scope>
    <source>
        <strain>cv. Nipponbare</strain>
    </source>
</reference>
<reference key="3">
    <citation type="journal article" date="2013" name="Rice">
        <title>Improvement of the Oryza sativa Nipponbare reference genome using next generation sequence and optical map data.</title>
        <authorList>
            <person name="Kawahara Y."/>
            <person name="de la Bastide M."/>
            <person name="Hamilton J.P."/>
            <person name="Kanamori H."/>
            <person name="McCombie W.R."/>
            <person name="Ouyang S."/>
            <person name="Schwartz D.C."/>
            <person name="Tanaka T."/>
            <person name="Wu J."/>
            <person name="Zhou S."/>
            <person name="Childs K.L."/>
            <person name="Davidson R.M."/>
            <person name="Lin H."/>
            <person name="Quesada-Ocampo L."/>
            <person name="Vaillancourt B."/>
            <person name="Sakai H."/>
            <person name="Lee S.S."/>
            <person name="Kim J."/>
            <person name="Numa H."/>
            <person name="Itoh T."/>
            <person name="Buell C.R."/>
            <person name="Matsumoto T."/>
        </authorList>
    </citation>
    <scope>GENOME REANNOTATION</scope>
    <source>
        <strain>cv. Nipponbare</strain>
    </source>
</reference>
<reference key="4">
    <citation type="journal article" date="2005" name="PLoS Biol.">
        <title>The genomes of Oryza sativa: a history of duplications.</title>
        <authorList>
            <person name="Yu J."/>
            <person name="Wang J."/>
            <person name="Lin W."/>
            <person name="Li S."/>
            <person name="Li H."/>
            <person name="Zhou J."/>
            <person name="Ni P."/>
            <person name="Dong W."/>
            <person name="Hu S."/>
            <person name="Zeng C."/>
            <person name="Zhang J."/>
            <person name="Zhang Y."/>
            <person name="Li R."/>
            <person name="Xu Z."/>
            <person name="Li S."/>
            <person name="Li X."/>
            <person name="Zheng H."/>
            <person name="Cong L."/>
            <person name="Lin L."/>
            <person name="Yin J."/>
            <person name="Geng J."/>
            <person name="Li G."/>
            <person name="Shi J."/>
            <person name="Liu J."/>
            <person name="Lv H."/>
            <person name="Li J."/>
            <person name="Wang J."/>
            <person name="Deng Y."/>
            <person name="Ran L."/>
            <person name="Shi X."/>
            <person name="Wang X."/>
            <person name="Wu Q."/>
            <person name="Li C."/>
            <person name="Ren X."/>
            <person name="Wang J."/>
            <person name="Wang X."/>
            <person name="Li D."/>
            <person name="Liu D."/>
            <person name="Zhang X."/>
            <person name="Ji Z."/>
            <person name="Zhao W."/>
            <person name="Sun Y."/>
            <person name="Zhang Z."/>
            <person name="Bao J."/>
            <person name="Han Y."/>
            <person name="Dong L."/>
            <person name="Ji J."/>
            <person name="Chen P."/>
            <person name="Wu S."/>
            <person name="Liu J."/>
            <person name="Xiao Y."/>
            <person name="Bu D."/>
            <person name="Tan J."/>
            <person name="Yang L."/>
            <person name="Ye C."/>
            <person name="Zhang J."/>
            <person name="Xu J."/>
            <person name="Zhou Y."/>
            <person name="Yu Y."/>
            <person name="Zhang B."/>
            <person name="Zhuang S."/>
            <person name="Wei H."/>
            <person name="Liu B."/>
            <person name="Lei M."/>
            <person name="Yu H."/>
            <person name="Li Y."/>
            <person name="Xu H."/>
            <person name="Wei S."/>
            <person name="He X."/>
            <person name="Fang L."/>
            <person name="Zhang Z."/>
            <person name="Zhang Y."/>
            <person name="Huang X."/>
            <person name="Su Z."/>
            <person name="Tong W."/>
            <person name="Li J."/>
            <person name="Tong Z."/>
            <person name="Li S."/>
            <person name="Ye J."/>
            <person name="Wang L."/>
            <person name="Fang L."/>
            <person name="Lei T."/>
            <person name="Chen C.-S."/>
            <person name="Chen H.-C."/>
            <person name="Xu Z."/>
            <person name="Li H."/>
            <person name="Huang H."/>
            <person name="Zhang F."/>
            <person name="Xu H."/>
            <person name="Li N."/>
            <person name="Zhao C."/>
            <person name="Li S."/>
            <person name="Dong L."/>
            <person name="Huang Y."/>
            <person name="Li L."/>
            <person name="Xi Y."/>
            <person name="Qi Q."/>
            <person name="Li W."/>
            <person name="Zhang B."/>
            <person name="Hu W."/>
            <person name="Zhang Y."/>
            <person name="Tian X."/>
            <person name="Jiao Y."/>
            <person name="Liang X."/>
            <person name="Jin J."/>
            <person name="Gao L."/>
            <person name="Zheng W."/>
            <person name="Hao B."/>
            <person name="Liu S.-M."/>
            <person name="Wang W."/>
            <person name="Yuan L."/>
            <person name="Cao M."/>
            <person name="McDermott J."/>
            <person name="Samudrala R."/>
            <person name="Wang J."/>
            <person name="Wong G.K.-S."/>
            <person name="Yang H."/>
        </authorList>
    </citation>
    <scope>NUCLEOTIDE SEQUENCE [LARGE SCALE GENOMIC DNA]</scope>
    <source>
        <strain>cv. Nipponbare</strain>
    </source>
</reference>
<reference key="5">
    <citation type="journal article" date="2003" name="Science">
        <title>Collection, mapping, and annotation of over 28,000 cDNA clones from japonica rice.</title>
        <authorList>
            <consortium name="The rice full-length cDNA consortium"/>
        </authorList>
    </citation>
    <scope>NUCLEOTIDE SEQUENCE [LARGE SCALE MRNA]</scope>
    <source>
        <strain>cv. Nipponbare</strain>
    </source>
</reference>
<reference key="6">
    <citation type="journal article" date="2008" name="BMC Genomics">
        <title>Genome-wide and expression analysis of protein phosphatase 2C in rice and Arabidopsis.</title>
        <authorList>
            <person name="Xue T."/>
            <person name="Wang D."/>
            <person name="Zhang S."/>
            <person name="Ehlting J."/>
            <person name="Ni F."/>
            <person name="Jacab S."/>
            <person name="Zheng C."/>
            <person name="Zhong Y."/>
        </authorList>
    </citation>
    <scope>GENE FAMILY</scope>
    <scope>NOMENCLATURE</scope>
</reference>
<organism>
    <name type="scientific">Oryza sativa subsp. japonica</name>
    <name type="common">Rice</name>
    <dbReference type="NCBI Taxonomy" id="39947"/>
    <lineage>
        <taxon>Eukaryota</taxon>
        <taxon>Viridiplantae</taxon>
        <taxon>Streptophyta</taxon>
        <taxon>Embryophyta</taxon>
        <taxon>Tracheophyta</taxon>
        <taxon>Spermatophyta</taxon>
        <taxon>Magnoliopsida</taxon>
        <taxon>Liliopsida</taxon>
        <taxon>Poales</taxon>
        <taxon>Poaceae</taxon>
        <taxon>BOP clade</taxon>
        <taxon>Oryzoideae</taxon>
        <taxon>Oryzeae</taxon>
        <taxon>Oryzinae</taxon>
        <taxon>Oryza</taxon>
        <taxon>Oryza sativa</taxon>
    </lineage>
</organism>
<evidence type="ECO:0000250" key="1"/>
<evidence type="ECO:0000255" key="2">
    <source>
        <dbReference type="PROSITE-ProRule" id="PRU01082"/>
    </source>
</evidence>
<evidence type="ECO:0000305" key="3"/>
<protein>
    <recommendedName>
        <fullName>Probable protein phosphatase 2C 27</fullName>
        <shortName>OsPP2C27</shortName>
        <ecNumber>3.1.3.16</ecNumber>
    </recommendedName>
</protein>
<proteinExistence type="evidence at transcript level"/>
<name>P2C27_ORYSJ</name>
<comment type="catalytic activity">
    <reaction>
        <text>O-phospho-L-seryl-[protein] + H2O = L-seryl-[protein] + phosphate</text>
        <dbReference type="Rhea" id="RHEA:20629"/>
        <dbReference type="Rhea" id="RHEA-COMP:9863"/>
        <dbReference type="Rhea" id="RHEA-COMP:11604"/>
        <dbReference type="ChEBI" id="CHEBI:15377"/>
        <dbReference type="ChEBI" id="CHEBI:29999"/>
        <dbReference type="ChEBI" id="CHEBI:43474"/>
        <dbReference type="ChEBI" id="CHEBI:83421"/>
        <dbReference type="EC" id="3.1.3.16"/>
    </reaction>
</comment>
<comment type="catalytic activity">
    <reaction>
        <text>O-phospho-L-threonyl-[protein] + H2O = L-threonyl-[protein] + phosphate</text>
        <dbReference type="Rhea" id="RHEA:47004"/>
        <dbReference type="Rhea" id="RHEA-COMP:11060"/>
        <dbReference type="Rhea" id="RHEA-COMP:11605"/>
        <dbReference type="ChEBI" id="CHEBI:15377"/>
        <dbReference type="ChEBI" id="CHEBI:30013"/>
        <dbReference type="ChEBI" id="CHEBI:43474"/>
        <dbReference type="ChEBI" id="CHEBI:61977"/>
        <dbReference type="EC" id="3.1.3.16"/>
    </reaction>
</comment>
<comment type="cofactor">
    <cofactor evidence="1">
        <name>Mg(2+)</name>
        <dbReference type="ChEBI" id="CHEBI:18420"/>
    </cofactor>
    <cofactor evidence="1">
        <name>Mn(2+)</name>
        <dbReference type="ChEBI" id="CHEBI:29035"/>
    </cofactor>
    <text evidence="1">Binds 2 magnesium or manganese ions per subunit.</text>
</comment>
<comment type="similarity">
    <text evidence="3">Belongs to the PP2C family.</text>
</comment>
<feature type="chain" id="PRO_0000363273" description="Probable protein phosphatase 2C 27">
    <location>
        <begin position="1"/>
        <end position="354"/>
    </location>
</feature>
<feature type="domain" description="PPM-type phosphatase" evidence="2">
    <location>
        <begin position="54"/>
        <end position="319"/>
    </location>
</feature>
<feature type="binding site" evidence="1">
    <location>
        <position position="98"/>
    </location>
    <ligand>
        <name>Mn(2+)</name>
        <dbReference type="ChEBI" id="CHEBI:29035"/>
        <label>1</label>
    </ligand>
</feature>
<feature type="binding site" evidence="1">
    <location>
        <position position="98"/>
    </location>
    <ligand>
        <name>Mn(2+)</name>
        <dbReference type="ChEBI" id="CHEBI:29035"/>
        <label>2</label>
    </ligand>
</feature>
<feature type="binding site" evidence="1">
    <location>
        <position position="99"/>
    </location>
    <ligand>
        <name>Mn(2+)</name>
        <dbReference type="ChEBI" id="CHEBI:29035"/>
        <label>1</label>
    </ligand>
</feature>
<feature type="binding site" evidence="1">
    <location>
        <position position="267"/>
    </location>
    <ligand>
        <name>Mn(2+)</name>
        <dbReference type="ChEBI" id="CHEBI:29035"/>
        <label>2</label>
    </ligand>
</feature>
<feature type="binding site" evidence="1">
    <location>
        <position position="310"/>
    </location>
    <ligand>
        <name>Mn(2+)</name>
        <dbReference type="ChEBI" id="CHEBI:29035"/>
        <label>2</label>
    </ligand>
</feature>
<feature type="sequence conflict" description="In Ref. 5; AK099720." evidence="3" ref="5">
    <original>C</original>
    <variation>Y</variation>
    <location>
        <position position="196"/>
    </location>
</feature>